<proteinExistence type="evidence at transcript level"/>
<sequence>MDYNVKDFGALGDGVSDDTAAIQAAIDAAYAAGGGTVYLPAGEYRVSGGEEPSDGCLTIKSNVYIVGAGMGETVIKLVDGWDQDVTGIVRSAYGEETSNFGMSDLTLDGNRDNTSGKVDGWFNGYIPGEDGADRDVTLERVEIREMSGYGFDPHEQTINLTIRDSVAHDNGLDGFVADFQIGGVFENNVSYNNDRHGFNIVTSTNDFVLSNNVAYGNGGAGLVIQRGSYDVAHPYGILIDGGAYYDNGLEGVQIKMAHDVTLQNAEIYGNGLYGVRVYGAEDVQILDNYIHDNSQSGSYAEILLQSYDDTAGVSGNFYTTTGTWIEGNTIVGSANSTYGIQERADGTDYSSLYANSVSNVQSGSVRLYGTNSVVSDLPGTGQQATLEGTTGNDTLTGSEAHETLLGLDGNDRLNGGAGNDILDGGAGRDNLTGGAGADLFRVSARTDSYRTDSASFNDLITDFDPAQDRIDLSALGFTGLGDGYNGTLAVVLNSAGTRTYLKSYEADAEGRRFEIALDGNFAGLLDDGNLIFERPVIEGDAGNNALLGTSAAETLLGHAGNDTLDGAGGDDILVGGAGRDTLTGGAGADLFRFDALSDSQRNYTTGDNQGDRIVDFSVGEDKLDVSALGFTGLGDGYNGTLAVVVNSAGDRTYVKSYETDADGYRFEFSLEGNYQDLGSESFVFATPSGQQLLEGSAGNDSLQGTAADEIVHGGAGRDTLSGGAGADVFRFSELTDSYRTASTSFADLITDFDLADDRIDLSGLGFSGLGDGYDGTLAVVVNSTGTRTYLKSYEANAAGERFEIALDGDLSAFTGANLILDERVVLEGSDGNDTLDGGSAAEELLGGAGNDSLDGGAGNDILDGGAGRDTLSGGSGSDIFRYDDALDSFRNYGTGVTGTDTITDFTPGEDLIDLSALGYTGLGDGYNGTLAVVLNGDGTRTYLKDRESDAEGNQFEIALDGDLVDRLDAGDFIFAEAAATTAIEVVGGTPTEEQLVA</sequence>
<name>ALGE5_AZOVI</name>
<reference key="1">
    <citation type="journal article" date="1995" name="Mol. Microbiol.">
        <title>A family of modular type mannuronan C-5-epimerase genes controls alginate structure in Azotobacter vinelandii.</title>
        <authorList>
            <person name="Ertesvaag H."/>
            <person name="Hoeidal H.K."/>
            <person name="Hals I.K."/>
            <person name="Rian A."/>
            <person name="Doseth B."/>
            <person name="Valla S."/>
        </authorList>
    </citation>
    <scope>NUCLEOTIDE SEQUENCE [GENOMIC DNA]</scope>
    <source>
        <strain>E</strain>
    </source>
</reference>
<reference key="2">
    <citation type="journal article" date="2000" name="Environ. Microbiol.">
        <title>Mannuronan C-5 epimerases and cellular differentiation of Azotobacter vinelandii.</title>
        <authorList>
            <person name="Hoeidal H.K."/>
            <person name="Glaerum Svanem B.I."/>
            <person name="Gimmestad M."/>
            <person name="Valla S."/>
        </authorList>
    </citation>
    <scope>EXPRESSION</scope>
    <source>
        <strain>E</strain>
    </source>
</reference>
<reference key="3">
    <citation type="journal article" date="1999" name="Metab. Eng.">
        <title>Mannuronan C-5-epimerases and their application for in vitro and in vivo design of new alginates useful in biotechnology.</title>
        <authorList>
            <person name="Ertesvaag H."/>
            <person name="Hoeidal H.K."/>
            <person name="Schjerven H."/>
            <person name="Glaerum Svanem B.I."/>
            <person name="Valla S."/>
        </authorList>
    </citation>
    <scope>REVIEW</scope>
</reference>
<evidence type="ECO:0000250" key="1">
    <source>
        <dbReference type="UniProtKB" id="Q44494"/>
    </source>
</evidence>
<evidence type="ECO:0000255" key="2"/>
<evidence type="ECO:0000303" key="3">
    <source>
    </source>
</evidence>
<evidence type="ECO:0000305" key="4"/>
<feature type="chain" id="PRO_0000219559" description="Mannuronan C5-epimerase AlgE5">
    <location>
        <begin position="1"/>
        <end position="997"/>
    </location>
</feature>
<feature type="repeat" description="PbH1 1" evidence="2">
    <location>
        <begin position="133"/>
        <end position="155"/>
    </location>
</feature>
<feature type="repeat" description="PbH1 2" evidence="2">
    <location>
        <begin position="157"/>
        <end position="179"/>
    </location>
</feature>
<feature type="repeat" description="PbH1 3" evidence="2">
    <location>
        <begin position="180"/>
        <end position="202"/>
    </location>
</feature>
<feature type="repeat" description="PbH1 4" evidence="2">
    <location>
        <begin position="204"/>
        <end position="226"/>
    </location>
</feature>
<feature type="repeat" description="PbH1 5" evidence="2">
    <location>
        <begin position="257"/>
        <end position="279"/>
    </location>
</feature>
<feature type="repeat" description="PbH1 6" evidence="2">
    <location>
        <begin position="280"/>
        <end position="315"/>
    </location>
</feature>
<feature type="repeat" description="PbH1 7" evidence="2">
    <location>
        <begin position="320"/>
        <end position="359"/>
    </location>
</feature>
<feature type="repeat" description="Hemolysin-type calcium-binding 1" evidence="2">
    <location>
        <begin position="388"/>
        <end position="403"/>
    </location>
</feature>
<feature type="repeat" description="Hemolysin-type calcium-binding 2" evidence="2">
    <location>
        <begin position="406"/>
        <end position="422"/>
    </location>
</feature>
<feature type="repeat" description="Hemolysin-type calcium-binding 3" evidence="2">
    <location>
        <begin position="424"/>
        <end position="439"/>
    </location>
</feature>
<feature type="repeat" description="Hemolysin-type calcium-binding 4" evidence="2">
    <location>
        <begin position="557"/>
        <end position="573"/>
    </location>
</feature>
<feature type="repeat" description="Hemolysin-type calcium-binding 5" evidence="2">
    <location>
        <begin position="574"/>
        <end position="590"/>
    </location>
</feature>
<feature type="repeat" description="Hemolysin-type calcium-binding 6" evidence="2">
    <location>
        <begin position="695"/>
        <end position="709"/>
    </location>
</feature>
<feature type="repeat" description="Hemolysin-type calcium-binding 7" evidence="2">
    <location>
        <begin position="712"/>
        <end position="729"/>
    </location>
</feature>
<feature type="repeat" description="Hemolysin-type calcium-binding 8" evidence="2">
    <location>
        <begin position="828"/>
        <end position="839"/>
    </location>
</feature>
<feature type="repeat" description="Hemolysin-type calcium-binding 9" evidence="2">
    <location>
        <begin position="846"/>
        <end position="862"/>
    </location>
</feature>
<feature type="repeat" description="Hemolysin-type calcium-binding 10" evidence="2">
    <location>
        <begin position="864"/>
        <end position="880"/>
    </location>
</feature>
<comment type="function">
    <text evidence="1">Converts beta-D-mannuronic acid (M) to alpha-L-guluronic acid (G), producing a polymer with gel-forming capacity, required for the formation of the cyst coat.</text>
</comment>
<comment type="catalytic activity">
    <reaction evidence="1">
        <text>[(1-&gt;4)-beta-D-mannuronosyl](n) = [alginate](n)</text>
        <dbReference type="Rhea" id="RHEA:45572"/>
        <dbReference type="Rhea" id="RHEA-COMP:11264"/>
        <dbReference type="Rhea" id="RHEA-COMP:11270"/>
        <dbReference type="ChEBI" id="CHEBI:58187"/>
        <dbReference type="ChEBI" id="CHEBI:85311"/>
        <dbReference type="EC" id="5.1.3.37"/>
    </reaction>
</comment>
<comment type="cofactor">
    <cofactor evidence="1">
        <name>Ca(2+)</name>
        <dbReference type="ChEBI" id="CHEBI:29108"/>
    </cofactor>
</comment>
<comment type="activity regulation">
    <text evidence="1">Inhibited by zinc.</text>
</comment>
<comment type="pathway">
    <text evidence="1">Glycan biosynthesis; alginate biosynthesis.</text>
</comment>
<comment type="subcellular location">
    <subcellularLocation>
        <location>Secreted</location>
    </subcellularLocation>
    <text>Probably exported via the hemolysin-type secretion pathway.</text>
</comment>
<comment type="developmental stage">
    <text>Produced during vegetative growth and in encysting cells.</text>
</comment>
<comment type="domain">
    <text>Composed of one catalytically active A module and four R modules.</text>
</comment>
<comment type="miscellaneous">
    <text>Each enzyme of this family of C5 epimerases introduces its own characteristic sequence distribution of G-blocks in their substrates, explaining the extensive sequence variability of alginates. These alginates of varying composition have different physical properties and are necessary at different stages of the bacterium life cycle.</text>
</comment>
<comment type="similarity">
    <text evidence="4">Belongs to the D-mannuronate C5-epimerase family.</text>
</comment>
<organism>
    <name type="scientific">Azotobacter vinelandii</name>
    <dbReference type="NCBI Taxonomy" id="354"/>
    <lineage>
        <taxon>Bacteria</taxon>
        <taxon>Pseudomonadati</taxon>
        <taxon>Pseudomonadota</taxon>
        <taxon>Gammaproteobacteria</taxon>
        <taxon>Pseudomonadales</taxon>
        <taxon>Pseudomonadaceae</taxon>
        <taxon>Azotobacter</taxon>
    </lineage>
</organism>
<accession>Q44492</accession>
<keyword id="KW-0016">Alginate biosynthesis</keyword>
<keyword id="KW-0106">Calcium</keyword>
<keyword id="KW-0413">Isomerase</keyword>
<keyword id="KW-0677">Repeat</keyword>
<keyword id="KW-0964">Secreted</keyword>
<gene>
    <name evidence="3" type="primary">algE5</name>
</gene>
<protein>
    <recommendedName>
        <fullName evidence="4">Mannuronan C5-epimerase AlgE5</fullName>
        <ecNumber evidence="1">5.1.3.37</ecNumber>
    </recommendedName>
    <alternativeName>
        <fullName>Poly(beta-D-mannuronate) C5 epimerase 5</fullName>
    </alternativeName>
</protein>
<dbReference type="EC" id="5.1.3.37" evidence="1"/>
<dbReference type="EMBL" id="L39013">
    <property type="protein sequence ID" value="AAA87309.1"/>
    <property type="molecule type" value="Genomic_DNA"/>
</dbReference>
<dbReference type="PIR" id="I39739">
    <property type="entry name" value="I39739"/>
</dbReference>
<dbReference type="SMR" id="Q44492"/>
<dbReference type="BRENDA" id="5.1.3.37">
    <property type="organism ID" value="49"/>
</dbReference>
<dbReference type="UniPathway" id="UPA00286"/>
<dbReference type="GO" id="GO:0005615">
    <property type="term" value="C:extracellular space"/>
    <property type="evidence" value="ECO:0007669"/>
    <property type="project" value="InterPro"/>
</dbReference>
<dbReference type="GO" id="GO:0005509">
    <property type="term" value="F:calcium ion binding"/>
    <property type="evidence" value="ECO:0007669"/>
    <property type="project" value="InterPro"/>
</dbReference>
<dbReference type="GO" id="GO:0016853">
    <property type="term" value="F:isomerase activity"/>
    <property type="evidence" value="ECO:0007669"/>
    <property type="project" value="UniProtKB-KW"/>
</dbReference>
<dbReference type="GO" id="GO:0042121">
    <property type="term" value="P:alginic acid biosynthetic process"/>
    <property type="evidence" value="ECO:0007669"/>
    <property type="project" value="UniProtKB-UniPathway"/>
</dbReference>
<dbReference type="Gene3D" id="2.150.10.10">
    <property type="entry name" value="Serralysin-like metalloprotease, C-terminal"/>
    <property type="match status" value="3"/>
</dbReference>
<dbReference type="Gene3D" id="2.160.20.10">
    <property type="entry name" value="Single-stranded right-handed beta-helix, Pectin lyase-like"/>
    <property type="match status" value="1"/>
</dbReference>
<dbReference type="InterPro" id="IPR039448">
    <property type="entry name" value="Beta_helix"/>
</dbReference>
<dbReference type="InterPro" id="IPR006633">
    <property type="entry name" value="Carb-bd_sugar_hydrolysis-dom"/>
</dbReference>
<dbReference type="InterPro" id="IPR018511">
    <property type="entry name" value="Hemolysin-typ_Ca-bd_CS"/>
</dbReference>
<dbReference type="InterPro" id="IPR001343">
    <property type="entry name" value="Hemolysn_Ca-bd"/>
</dbReference>
<dbReference type="InterPro" id="IPR006626">
    <property type="entry name" value="PbH1"/>
</dbReference>
<dbReference type="InterPro" id="IPR012334">
    <property type="entry name" value="Pectin_lyas_fold"/>
</dbReference>
<dbReference type="InterPro" id="IPR011050">
    <property type="entry name" value="Pectin_lyase_fold/virulence"/>
</dbReference>
<dbReference type="InterPro" id="IPR013858">
    <property type="entry name" value="Peptidase_M10B_C"/>
</dbReference>
<dbReference type="InterPro" id="IPR024535">
    <property type="entry name" value="RHGA/B-epi-like_pectate_lyase"/>
</dbReference>
<dbReference type="InterPro" id="IPR050557">
    <property type="entry name" value="RTX_toxin/Mannuronan_C5-epim"/>
</dbReference>
<dbReference type="InterPro" id="IPR011049">
    <property type="entry name" value="Serralysin-like_metalloprot_C"/>
</dbReference>
<dbReference type="PANTHER" id="PTHR38340">
    <property type="entry name" value="S-LAYER PROTEIN"/>
    <property type="match status" value="1"/>
</dbReference>
<dbReference type="PANTHER" id="PTHR38340:SF1">
    <property type="entry name" value="S-LAYER PROTEIN"/>
    <property type="match status" value="1"/>
</dbReference>
<dbReference type="Pfam" id="PF13229">
    <property type="entry name" value="Beta_helix"/>
    <property type="match status" value="1"/>
</dbReference>
<dbReference type="Pfam" id="PF00353">
    <property type="entry name" value="HemolysinCabind"/>
    <property type="match status" value="5"/>
</dbReference>
<dbReference type="Pfam" id="PF12708">
    <property type="entry name" value="Pect-lyase_RHGA_epim"/>
    <property type="match status" value="1"/>
</dbReference>
<dbReference type="Pfam" id="PF08548">
    <property type="entry name" value="Peptidase_M10_C"/>
    <property type="match status" value="4"/>
</dbReference>
<dbReference type="PRINTS" id="PR00313">
    <property type="entry name" value="CABNDNGRPT"/>
</dbReference>
<dbReference type="SMART" id="SM00722">
    <property type="entry name" value="CASH"/>
    <property type="match status" value="2"/>
</dbReference>
<dbReference type="SMART" id="SM00710">
    <property type="entry name" value="PbH1"/>
    <property type="match status" value="7"/>
</dbReference>
<dbReference type="SUPFAM" id="SSF51120">
    <property type="entry name" value="beta-Roll"/>
    <property type="match status" value="4"/>
</dbReference>
<dbReference type="SUPFAM" id="SSF51126">
    <property type="entry name" value="Pectin lyase-like"/>
    <property type="match status" value="1"/>
</dbReference>
<dbReference type="PROSITE" id="PS00330">
    <property type="entry name" value="HEMOLYSIN_CALCIUM"/>
    <property type="match status" value="6"/>
</dbReference>